<reference key="1">
    <citation type="journal article" date="2005" name="PLoS Genet.">
        <title>Life in hot carbon monoxide: the complete genome sequence of Carboxydothermus hydrogenoformans Z-2901.</title>
        <authorList>
            <person name="Wu M."/>
            <person name="Ren Q."/>
            <person name="Durkin A.S."/>
            <person name="Daugherty S.C."/>
            <person name="Brinkac L.M."/>
            <person name="Dodson R.J."/>
            <person name="Madupu R."/>
            <person name="Sullivan S.A."/>
            <person name="Kolonay J.F."/>
            <person name="Nelson W.C."/>
            <person name="Tallon L.J."/>
            <person name="Jones K.M."/>
            <person name="Ulrich L.E."/>
            <person name="Gonzalez J.M."/>
            <person name="Zhulin I.B."/>
            <person name="Robb F.T."/>
            <person name="Eisen J.A."/>
        </authorList>
    </citation>
    <scope>NUCLEOTIDE SEQUENCE [LARGE SCALE GENOMIC DNA]</scope>
    <source>
        <strain>ATCC BAA-161 / DSM 6008 / Z-2901</strain>
    </source>
</reference>
<comment type="function">
    <text evidence="1">Participates in a DNA-damage check-point that is active prior to asymmetric division when DNA is damaged. DisA forms globular foci that rapidly scan along the chromosomes during sporulation, searching for lesions. When a lesion is present, DisA pauses at the lesion site. This triggers a cellular response that culminates in a temporary block in sporulation initiation.</text>
</comment>
<comment type="function">
    <text evidence="1">Also has diadenylate cyclase activity, catalyzing the condensation of 2 ATP molecules into cyclic di-AMP (c-di-AMP). c-di-AMP acts as a signaling molecule that couples DNA integrity with progression of sporulation. The rise in c-di-AMP level generated by DisA while scanning the chromosome, operates as a positive signal that advances sporulation; upon encountering a lesion, the DisA focus arrests at the damaged site and halts c-di-AMP synthesis.</text>
</comment>
<comment type="catalytic activity">
    <reaction evidence="1">
        <text>2 ATP = 3',3'-c-di-AMP + 2 diphosphate</text>
        <dbReference type="Rhea" id="RHEA:35655"/>
        <dbReference type="ChEBI" id="CHEBI:30616"/>
        <dbReference type="ChEBI" id="CHEBI:33019"/>
        <dbReference type="ChEBI" id="CHEBI:71500"/>
        <dbReference type="EC" id="2.7.7.85"/>
    </reaction>
</comment>
<comment type="cofactor">
    <cofactor evidence="1">
        <name>Mg(2+)</name>
        <dbReference type="ChEBI" id="CHEBI:18420"/>
    </cofactor>
</comment>
<comment type="subunit">
    <text evidence="1">Homooctamer.</text>
</comment>
<comment type="similarity">
    <text evidence="1">Belongs to the DisA family.</text>
</comment>
<feature type="chain" id="PRO_0000255639" description="DNA integrity scanning protein DisA">
    <location>
        <begin position="1"/>
        <end position="352"/>
    </location>
</feature>
<feature type="domain" description="DAC" evidence="2">
    <location>
        <begin position="3"/>
        <end position="143"/>
    </location>
</feature>
<feature type="binding site" evidence="1">
    <location>
        <position position="70"/>
    </location>
    <ligand>
        <name>ATP</name>
        <dbReference type="ChEBI" id="CHEBI:30616"/>
    </ligand>
</feature>
<feature type="binding site" evidence="1">
    <location>
        <position position="88"/>
    </location>
    <ligand>
        <name>ATP</name>
        <dbReference type="ChEBI" id="CHEBI:30616"/>
    </ligand>
</feature>
<feature type="binding site" evidence="1">
    <location>
        <begin position="101"/>
        <end position="105"/>
    </location>
    <ligand>
        <name>ATP</name>
        <dbReference type="ChEBI" id="CHEBI:30616"/>
    </ligand>
</feature>
<evidence type="ECO:0000255" key="1">
    <source>
        <dbReference type="HAMAP-Rule" id="MF_01438"/>
    </source>
</evidence>
<evidence type="ECO:0000255" key="2">
    <source>
        <dbReference type="PROSITE-ProRule" id="PRU01130"/>
    </source>
</evidence>
<organism>
    <name type="scientific">Carboxydothermus hydrogenoformans (strain ATCC BAA-161 / DSM 6008 / Z-2901)</name>
    <dbReference type="NCBI Taxonomy" id="246194"/>
    <lineage>
        <taxon>Bacteria</taxon>
        <taxon>Bacillati</taxon>
        <taxon>Bacillota</taxon>
        <taxon>Clostridia</taxon>
        <taxon>Thermoanaerobacterales</taxon>
        <taxon>Thermoanaerobacteraceae</taxon>
        <taxon>Carboxydothermus</taxon>
    </lineage>
</organism>
<gene>
    <name evidence="1" type="primary">disA</name>
    <name type="ordered locus">CHY_2346</name>
</gene>
<dbReference type="EC" id="2.7.7.85" evidence="1"/>
<dbReference type="EMBL" id="CP000141">
    <property type="protein sequence ID" value="ABB13725.1"/>
    <property type="molecule type" value="Genomic_DNA"/>
</dbReference>
<dbReference type="RefSeq" id="WP_011345224.1">
    <property type="nucleotide sequence ID" value="NC_007503.1"/>
</dbReference>
<dbReference type="SMR" id="Q3A9N3"/>
<dbReference type="FunCoup" id="Q3A9N3">
    <property type="interactions" value="15"/>
</dbReference>
<dbReference type="STRING" id="246194.CHY_2346"/>
<dbReference type="KEGG" id="chy:CHY_2346"/>
<dbReference type="eggNOG" id="COG1623">
    <property type="taxonomic scope" value="Bacteria"/>
</dbReference>
<dbReference type="HOGENOM" id="CLU_787128_0_0_9"/>
<dbReference type="InParanoid" id="Q3A9N3"/>
<dbReference type="OrthoDB" id="41841at2"/>
<dbReference type="Proteomes" id="UP000002706">
    <property type="component" value="Chromosome"/>
</dbReference>
<dbReference type="GO" id="GO:0004016">
    <property type="term" value="F:adenylate cyclase activity"/>
    <property type="evidence" value="ECO:0007669"/>
    <property type="project" value="TreeGrafter"/>
</dbReference>
<dbReference type="GO" id="GO:0005524">
    <property type="term" value="F:ATP binding"/>
    <property type="evidence" value="ECO:0007669"/>
    <property type="project" value="UniProtKB-UniRule"/>
</dbReference>
<dbReference type="GO" id="GO:0106408">
    <property type="term" value="F:diadenylate cyclase activity"/>
    <property type="evidence" value="ECO:0007669"/>
    <property type="project" value="UniProtKB-EC"/>
</dbReference>
<dbReference type="GO" id="GO:0003677">
    <property type="term" value="F:DNA binding"/>
    <property type="evidence" value="ECO:0007669"/>
    <property type="project" value="UniProtKB-UniRule"/>
</dbReference>
<dbReference type="GO" id="GO:0006281">
    <property type="term" value="P:DNA repair"/>
    <property type="evidence" value="ECO:0007669"/>
    <property type="project" value="UniProtKB-UniRule"/>
</dbReference>
<dbReference type="FunFam" id="3.40.1700.10:FF:000001">
    <property type="entry name" value="DNA integrity scanning protein DisA"/>
    <property type="match status" value="1"/>
</dbReference>
<dbReference type="Gene3D" id="1.10.150.20">
    <property type="entry name" value="5' to 3' exonuclease, C-terminal subdomain"/>
    <property type="match status" value="1"/>
</dbReference>
<dbReference type="Gene3D" id="1.20.1260.110">
    <property type="entry name" value="DNA integrity scanning linker region"/>
    <property type="match status" value="1"/>
</dbReference>
<dbReference type="Gene3D" id="3.40.1700.10">
    <property type="entry name" value="DNA integrity scanning protein, DisA, N-terminal domain"/>
    <property type="match status" value="1"/>
</dbReference>
<dbReference type="HAMAP" id="MF_01438">
    <property type="entry name" value="DisA"/>
    <property type="match status" value="1"/>
</dbReference>
<dbReference type="InterPro" id="IPR050338">
    <property type="entry name" value="DisA"/>
</dbReference>
<dbReference type="InterPro" id="IPR041663">
    <property type="entry name" value="DisA/LigA_HHH"/>
</dbReference>
<dbReference type="InterPro" id="IPR038331">
    <property type="entry name" value="DisA_sf"/>
</dbReference>
<dbReference type="InterPro" id="IPR036888">
    <property type="entry name" value="DNA_integrity_DisA_N_sf"/>
</dbReference>
<dbReference type="InterPro" id="IPR018906">
    <property type="entry name" value="DNA_integrity_scan_DisA_link"/>
</dbReference>
<dbReference type="InterPro" id="IPR003390">
    <property type="entry name" value="DNA_integrity_scan_DisA_N"/>
</dbReference>
<dbReference type="InterPro" id="IPR023763">
    <property type="entry name" value="DNA_integrity_scanning_protein"/>
</dbReference>
<dbReference type="InterPro" id="IPR010994">
    <property type="entry name" value="RuvA_2-like"/>
</dbReference>
<dbReference type="NCBIfam" id="NF010009">
    <property type="entry name" value="PRK13482.1"/>
    <property type="match status" value="1"/>
</dbReference>
<dbReference type="PANTHER" id="PTHR34185">
    <property type="entry name" value="DIADENYLATE CYCLASE"/>
    <property type="match status" value="1"/>
</dbReference>
<dbReference type="PANTHER" id="PTHR34185:SF3">
    <property type="entry name" value="DNA INTEGRITY SCANNING PROTEIN DISA"/>
    <property type="match status" value="1"/>
</dbReference>
<dbReference type="Pfam" id="PF02457">
    <property type="entry name" value="DAC"/>
    <property type="match status" value="1"/>
</dbReference>
<dbReference type="Pfam" id="PF10635">
    <property type="entry name" value="DisA-linker"/>
    <property type="match status" value="1"/>
</dbReference>
<dbReference type="Pfam" id="PF12826">
    <property type="entry name" value="HHH_2"/>
    <property type="match status" value="1"/>
</dbReference>
<dbReference type="SUPFAM" id="SSF47781">
    <property type="entry name" value="RuvA domain 2-like"/>
    <property type="match status" value="1"/>
</dbReference>
<dbReference type="SUPFAM" id="SSF143597">
    <property type="entry name" value="YojJ-like"/>
    <property type="match status" value="1"/>
</dbReference>
<dbReference type="PROSITE" id="PS51794">
    <property type="entry name" value="DAC"/>
    <property type="match status" value="1"/>
</dbReference>
<name>DISA_CARHZ</name>
<proteinExistence type="inferred from homology"/>
<keyword id="KW-0067">ATP-binding</keyword>
<keyword id="KW-0227">DNA damage</keyword>
<keyword id="KW-0234">DNA repair</keyword>
<keyword id="KW-0238">DNA-binding</keyword>
<keyword id="KW-0460">Magnesium</keyword>
<keyword id="KW-0547">Nucleotide-binding</keyword>
<keyword id="KW-0548">Nucleotidyltransferase</keyword>
<keyword id="KW-1185">Reference proteome</keyword>
<keyword id="KW-0808">Transferase</keyword>
<accession>Q3A9N3</accession>
<sequence length="352" mass="39185">MKDERIVLALKSVAPGTPLREGLEQILRAKTGGLIVIGDTAKIMEVVEGGFAINTDYSPAYLYELAKMDGAIILSEDGKKILYANAQLVPDPAIPSSETGIRHRTAERVAKQTNALVIAISQRRSVITLYQGNFKYSLSEVSVILNKANQAIATLEKYRAVLDKTLMRLTNLEFDDMVTLLDVAKALQRVEMVLRIEREIERYIWELGSEGRLISMQLEELIANVEDEGLLIIQDYSLLGPEKTPEGILSLIRTWSSEDLLDYSLIVRALGYPGSASILDQPVSPRGYRILDKIPRLPVAVIENLVQTFGNLKNIMSASIEELDDVEGIGEVRARSIKEGLKKLREQTNYTL</sequence>
<protein>
    <recommendedName>
        <fullName evidence="1">DNA integrity scanning protein DisA</fullName>
    </recommendedName>
    <alternativeName>
        <fullName evidence="1">Cyclic di-AMP synthase</fullName>
        <shortName evidence="1">c-di-AMP synthase</shortName>
    </alternativeName>
    <alternativeName>
        <fullName evidence="1">Diadenylate cyclase</fullName>
        <ecNumber evidence="1">2.7.7.85</ecNumber>
    </alternativeName>
</protein>